<sequence>DGVTDPLEVNVVK</sequence>
<proteinExistence type="evidence at protein level"/>
<comment type="subcellular location">
    <subcellularLocation>
        <location evidence="1">Secreted</location>
        <location evidence="1">Cell wall</location>
    </subcellularLocation>
</comment>
<accession>P85491</accession>
<organism>
    <name type="scientific">Pinus halepensis</name>
    <name type="common">Aleppo pine</name>
    <dbReference type="NCBI Taxonomy" id="71633"/>
    <lineage>
        <taxon>Eukaryota</taxon>
        <taxon>Viridiplantae</taxon>
        <taxon>Streptophyta</taxon>
        <taxon>Embryophyta</taxon>
        <taxon>Tracheophyta</taxon>
        <taxon>Spermatophyta</taxon>
        <taxon>Pinopsida</taxon>
        <taxon>Pinidae</taxon>
        <taxon>Conifers I</taxon>
        <taxon>Pinales</taxon>
        <taxon>Pinaceae</taxon>
        <taxon>Pinus</taxon>
        <taxon>Pinus subgen. Pinus</taxon>
    </lineage>
</organism>
<protein>
    <recommendedName>
        <fullName>Unknown protein 7</fullName>
    </recommendedName>
</protein>
<feature type="chain" id="PRO_0000326449" description="Unknown protein 7">
    <location>
        <begin position="1" status="less than"/>
        <end position="13" status="greater than"/>
    </location>
</feature>
<feature type="unsure residue" description="L or I">
    <location>
        <position position="7"/>
    </location>
</feature>
<feature type="unsure residue" description="K or Q">
    <location>
        <position position="13"/>
    </location>
</feature>
<feature type="non-terminal residue" evidence="2">
    <location>
        <position position="1"/>
    </location>
</feature>
<feature type="non-terminal residue" evidence="2">
    <location>
        <position position="13"/>
    </location>
</feature>
<reference evidence="3" key="1">
    <citation type="journal article" date="2009" name="J. Plant Physiol.">
        <title>Analysis of the soluble cell wall proteome of gymnosperms.</title>
        <authorList>
            <person name="Uzal E.N."/>
            <person name="Gomez-Ros L.V."/>
            <person name="Hernandez J.A."/>
            <person name="Pedreno M.A."/>
            <person name="Cuello J."/>
            <person name="Ros Barcelo A."/>
        </authorList>
    </citation>
    <scope>PROTEIN SEQUENCE</scope>
    <scope>SUBCELLULAR LOCATION</scope>
    <source>
        <strain evidence="1">PC-801</strain>
        <tissue evidence="1">Callus</tissue>
    </source>
</reference>
<name>UP07_PINHA</name>
<dbReference type="GO" id="GO:0005576">
    <property type="term" value="C:extracellular region"/>
    <property type="evidence" value="ECO:0007669"/>
    <property type="project" value="UniProtKB-KW"/>
</dbReference>
<evidence type="ECO:0000269" key="1">
    <source>
    </source>
</evidence>
<evidence type="ECO:0000303" key="2">
    <source>
    </source>
</evidence>
<evidence type="ECO:0000305" key="3"/>
<keyword id="KW-0134">Cell wall</keyword>
<keyword id="KW-0903">Direct protein sequencing</keyword>
<keyword id="KW-0964">Secreted</keyword>